<accession>Q2P4B8</accession>
<sequence length="432" mass="46688">MTGIGNQTSGIETGVHDRAPADGEPTALPISHSPLPIPGAHARPPRFALIAGEASGDILGAGLIAQLRLRYPNAEFVGIGGDAMRGAGCQTWFDASELAVMGLTEVLRHLPRLLKLRSAFRERVLAWKPDVFIGIDAPDFNLPVERWLKQRGIKTVHYVSPSVWAWREKRAEKIAVSADLVLCLFPMEPPIYAKHGVDARFVGHPMADDIAYQADRDAARATLGLSASSTVLAVLPGSRHGEISRLGDTFLQAAWLVCEHIPNLHVLVPAANAGCKQLLAEQLSRSSLPVMRSHLINGQARTAMLAADVVLLASGTATLEAMLVKRPMVVGYKVAPLTYRIVKLLGLIKVNRYALPNILANDDLAPELMQDDCMPERLCVALLDWLKHPAKVAALQPRYLALHAALRRDASARAAEAVAGLLQGRDWSGANI</sequence>
<evidence type="ECO:0000255" key="1">
    <source>
        <dbReference type="HAMAP-Rule" id="MF_00392"/>
    </source>
</evidence>
<evidence type="ECO:0000256" key="2">
    <source>
        <dbReference type="SAM" id="MobiDB-lite"/>
    </source>
</evidence>
<gene>
    <name evidence="1" type="primary">lpxB</name>
    <name type="ordered locus">XOO1854</name>
</gene>
<proteinExistence type="inferred from homology"/>
<feature type="chain" id="PRO_0000255235" description="Lipid-A-disaccharide synthase">
    <location>
        <begin position="1"/>
        <end position="432"/>
    </location>
</feature>
<feature type="region of interest" description="Disordered" evidence="2">
    <location>
        <begin position="1"/>
        <end position="35"/>
    </location>
</feature>
<feature type="compositionally biased region" description="Polar residues" evidence="2">
    <location>
        <begin position="1"/>
        <end position="11"/>
    </location>
</feature>
<reference key="1">
    <citation type="journal article" date="2005" name="Jpn. Agric. Res. Q.">
        <title>Genome sequence of Xanthomonas oryzae pv. oryzae suggests contribution of large numbers of effector genes and insertion sequences to its race diversity.</title>
        <authorList>
            <person name="Ochiai H."/>
            <person name="Inoue Y."/>
            <person name="Takeya M."/>
            <person name="Sasaki A."/>
            <person name="Kaku H."/>
        </authorList>
    </citation>
    <scope>NUCLEOTIDE SEQUENCE [LARGE SCALE GENOMIC DNA]</scope>
    <source>
        <strain>MAFF 311018</strain>
    </source>
</reference>
<dbReference type="EC" id="2.4.1.182" evidence="1"/>
<dbReference type="EMBL" id="AP008229">
    <property type="protein sequence ID" value="BAE68609.1"/>
    <property type="molecule type" value="Genomic_DNA"/>
</dbReference>
<dbReference type="SMR" id="Q2P4B8"/>
<dbReference type="CAZy" id="GT19">
    <property type="family name" value="Glycosyltransferase Family 19"/>
</dbReference>
<dbReference type="KEGG" id="xom:XOO1854"/>
<dbReference type="HOGENOM" id="CLU_036577_3_0_6"/>
<dbReference type="UniPathway" id="UPA00973"/>
<dbReference type="GO" id="GO:0016020">
    <property type="term" value="C:membrane"/>
    <property type="evidence" value="ECO:0007669"/>
    <property type="project" value="GOC"/>
</dbReference>
<dbReference type="GO" id="GO:0008915">
    <property type="term" value="F:lipid-A-disaccharide synthase activity"/>
    <property type="evidence" value="ECO:0007669"/>
    <property type="project" value="UniProtKB-UniRule"/>
</dbReference>
<dbReference type="GO" id="GO:0005543">
    <property type="term" value="F:phospholipid binding"/>
    <property type="evidence" value="ECO:0007669"/>
    <property type="project" value="TreeGrafter"/>
</dbReference>
<dbReference type="GO" id="GO:0009245">
    <property type="term" value="P:lipid A biosynthetic process"/>
    <property type="evidence" value="ECO:0007669"/>
    <property type="project" value="UniProtKB-UniRule"/>
</dbReference>
<dbReference type="CDD" id="cd01635">
    <property type="entry name" value="Glycosyltransferase_GTB-type"/>
    <property type="match status" value="1"/>
</dbReference>
<dbReference type="HAMAP" id="MF_00392">
    <property type="entry name" value="LpxB"/>
    <property type="match status" value="1"/>
</dbReference>
<dbReference type="InterPro" id="IPR003835">
    <property type="entry name" value="Glyco_trans_19"/>
</dbReference>
<dbReference type="NCBIfam" id="TIGR00215">
    <property type="entry name" value="lpxB"/>
    <property type="match status" value="1"/>
</dbReference>
<dbReference type="PANTHER" id="PTHR30372">
    <property type="entry name" value="LIPID-A-DISACCHARIDE SYNTHASE"/>
    <property type="match status" value="1"/>
</dbReference>
<dbReference type="PANTHER" id="PTHR30372:SF4">
    <property type="entry name" value="LIPID-A-DISACCHARIDE SYNTHASE, MITOCHONDRIAL-RELATED"/>
    <property type="match status" value="1"/>
</dbReference>
<dbReference type="Pfam" id="PF02684">
    <property type="entry name" value="LpxB"/>
    <property type="match status" value="1"/>
</dbReference>
<dbReference type="SUPFAM" id="SSF53756">
    <property type="entry name" value="UDP-Glycosyltransferase/glycogen phosphorylase"/>
    <property type="match status" value="1"/>
</dbReference>
<keyword id="KW-0328">Glycosyltransferase</keyword>
<keyword id="KW-0441">Lipid A biosynthesis</keyword>
<keyword id="KW-0444">Lipid biosynthesis</keyword>
<keyword id="KW-0443">Lipid metabolism</keyword>
<keyword id="KW-0808">Transferase</keyword>
<comment type="function">
    <text evidence="1">Condensation of UDP-2,3-diacylglucosamine and 2,3-diacylglucosamine-1-phosphate to form lipid A disaccharide, a precursor of lipid A, a phosphorylated glycolipid that anchors the lipopolysaccharide to the outer membrane of the cell.</text>
</comment>
<comment type="catalytic activity">
    <reaction evidence="1">
        <text>a lipid X + a UDP-2-N,3-O-bis[(3R)-3-hydroxyacyl]-alpha-D-glucosamine = a lipid A disaccharide + UDP + H(+)</text>
        <dbReference type="Rhea" id="RHEA:67828"/>
        <dbReference type="ChEBI" id="CHEBI:15378"/>
        <dbReference type="ChEBI" id="CHEBI:58223"/>
        <dbReference type="ChEBI" id="CHEBI:137748"/>
        <dbReference type="ChEBI" id="CHEBI:176338"/>
        <dbReference type="ChEBI" id="CHEBI:176343"/>
        <dbReference type="EC" id="2.4.1.182"/>
    </reaction>
</comment>
<comment type="pathway">
    <text evidence="1">Bacterial outer membrane biogenesis; LPS lipid A biosynthesis.</text>
</comment>
<comment type="similarity">
    <text evidence="1">Belongs to the LpxB family.</text>
</comment>
<protein>
    <recommendedName>
        <fullName evidence="1">Lipid-A-disaccharide synthase</fullName>
        <ecNumber evidence="1">2.4.1.182</ecNumber>
    </recommendedName>
</protein>
<organism>
    <name type="scientific">Xanthomonas oryzae pv. oryzae (strain MAFF 311018)</name>
    <dbReference type="NCBI Taxonomy" id="342109"/>
    <lineage>
        <taxon>Bacteria</taxon>
        <taxon>Pseudomonadati</taxon>
        <taxon>Pseudomonadota</taxon>
        <taxon>Gammaproteobacteria</taxon>
        <taxon>Lysobacterales</taxon>
        <taxon>Lysobacteraceae</taxon>
        <taxon>Xanthomonas</taxon>
    </lineage>
</organism>
<name>LPXB_XANOM</name>